<sequence length="95" mass="10287">MSVDISTVKRVAHLARIAVNDDDAERMTGELNAILGFVEQLNEVNVDGIEPMTSVTPMDMRMRQDKVTDGGIAAAVVANAPVTEDNFFVVPKVVE</sequence>
<name>GATC_BRUA4</name>
<gene>
    <name evidence="1" type="primary">gatC</name>
    <name type="ordered locus">Oant_3662</name>
</gene>
<feature type="chain" id="PRO_1000016163" description="Aspartyl/glutamyl-tRNA(Asn/Gln) amidotransferase subunit C">
    <location>
        <begin position="1"/>
        <end position="95"/>
    </location>
</feature>
<organism>
    <name type="scientific">Brucella anthropi (strain ATCC 49188 / DSM 6882 / CCUG 24695 / JCM 21032 / LMG 3331 / NBRC 15819 / NCTC 12168 / Alc 37)</name>
    <name type="common">Ochrobactrum anthropi</name>
    <dbReference type="NCBI Taxonomy" id="439375"/>
    <lineage>
        <taxon>Bacteria</taxon>
        <taxon>Pseudomonadati</taxon>
        <taxon>Pseudomonadota</taxon>
        <taxon>Alphaproteobacteria</taxon>
        <taxon>Hyphomicrobiales</taxon>
        <taxon>Brucellaceae</taxon>
        <taxon>Brucella/Ochrobactrum group</taxon>
        <taxon>Brucella</taxon>
    </lineage>
</organism>
<keyword id="KW-0067">ATP-binding</keyword>
<keyword id="KW-0436">Ligase</keyword>
<keyword id="KW-0547">Nucleotide-binding</keyword>
<keyword id="KW-0648">Protein biosynthesis</keyword>
<keyword id="KW-1185">Reference proteome</keyword>
<protein>
    <recommendedName>
        <fullName evidence="1">Aspartyl/glutamyl-tRNA(Asn/Gln) amidotransferase subunit C</fullName>
        <shortName evidence="1">Asp/Glu-ADT subunit C</shortName>
        <ecNumber evidence="1">6.3.5.-</ecNumber>
    </recommendedName>
</protein>
<comment type="function">
    <text evidence="1">Allows the formation of correctly charged Asn-tRNA(Asn) or Gln-tRNA(Gln) through the transamidation of misacylated Asp-tRNA(Asn) or Glu-tRNA(Gln) in organisms which lack either or both of asparaginyl-tRNA or glutaminyl-tRNA synthetases. The reaction takes place in the presence of glutamine and ATP through an activated phospho-Asp-tRNA(Asn) or phospho-Glu-tRNA(Gln).</text>
</comment>
<comment type="catalytic activity">
    <reaction evidence="1">
        <text>L-glutamyl-tRNA(Gln) + L-glutamine + ATP + H2O = L-glutaminyl-tRNA(Gln) + L-glutamate + ADP + phosphate + H(+)</text>
        <dbReference type="Rhea" id="RHEA:17521"/>
        <dbReference type="Rhea" id="RHEA-COMP:9681"/>
        <dbReference type="Rhea" id="RHEA-COMP:9684"/>
        <dbReference type="ChEBI" id="CHEBI:15377"/>
        <dbReference type="ChEBI" id="CHEBI:15378"/>
        <dbReference type="ChEBI" id="CHEBI:29985"/>
        <dbReference type="ChEBI" id="CHEBI:30616"/>
        <dbReference type="ChEBI" id="CHEBI:43474"/>
        <dbReference type="ChEBI" id="CHEBI:58359"/>
        <dbReference type="ChEBI" id="CHEBI:78520"/>
        <dbReference type="ChEBI" id="CHEBI:78521"/>
        <dbReference type="ChEBI" id="CHEBI:456216"/>
    </reaction>
</comment>
<comment type="catalytic activity">
    <reaction evidence="1">
        <text>L-aspartyl-tRNA(Asn) + L-glutamine + ATP + H2O = L-asparaginyl-tRNA(Asn) + L-glutamate + ADP + phosphate + 2 H(+)</text>
        <dbReference type="Rhea" id="RHEA:14513"/>
        <dbReference type="Rhea" id="RHEA-COMP:9674"/>
        <dbReference type="Rhea" id="RHEA-COMP:9677"/>
        <dbReference type="ChEBI" id="CHEBI:15377"/>
        <dbReference type="ChEBI" id="CHEBI:15378"/>
        <dbReference type="ChEBI" id="CHEBI:29985"/>
        <dbReference type="ChEBI" id="CHEBI:30616"/>
        <dbReference type="ChEBI" id="CHEBI:43474"/>
        <dbReference type="ChEBI" id="CHEBI:58359"/>
        <dbReference type="ChEBI" id="CHEBI:78515"/>
        <dbReference type="ChEBI" id="CHEBI:78516"/>
        <dbReference type="ChEBI" id="CHEBI:456216"/>
    </reaction>
</comment>
<comment type="subunit">
    <text evidence="1">Heterotrimer of A, B and C subunits.</text>
</comment>
<comment type="similarity">
    <text evidence="1">Belongs to the GatC family.</text>
</comment>
<evidence type="ECO:0000255" key="1">
    <source>
        <dbReference type="HAMAP-Rule" id="MF_00122"/>
    </source>
</evidence>
<reference key="1">
    <citation type="journal article" date="2011" name="J. Bacteriol.">
        <title>Genome of Ochrobactrum anthropi ATCC 49188 T, a versatile opportunistic pathogen and symbiont of several eukaryotic hosts.</title>
        <authorList>
            <person name="Chain P.S."/>
            <person name="Lang D.M."/>
            <person name="Comerci D.J."/>
            <person name="Malfatti S.A."/>
            <person name="Vergez L.M."/>
            <person name="Shin M."/>
            <person name="Ugalde R.A."/>
            <person name="Garcia E."/>
            <person name="Tolmasky M.E."/>
        </authorList>
    </citation>
    <scope>NUCLEOTIDE SEQUENCE [LARGE SCALE GENOMIC DNA]</scope>
    <source>
        <strain>ATCC 49188 / DSM 6882 / CCUG 24695 / JCM 21032 / LMG 3331 / NBRC 15819 / NCTC 12168 / Alc 37</strain>
    </source>
</reference>
<accession>A6X564</accession>
<proteinExistence type="inferred from homology"/>
<dbReference type="EC" id="6.3.5.-" evidence="1"/>
<dbReference type="EMBL" id="CP000759">
    <property type="protein sequence ID" value="ABS16368.1"/>
    <property type="molecule type" value="Genomic_DNA"/>
</dbReference>
<dbReference type="RefSeq" id="WP_010658861.1">
    <property type="nucleotide sequence ID" value="NC_009668.1"/>
</dbReference>
<dbReference type="SMR" id="A6X564"/>
<dbReference type="STRING" id="439375.Oant_3662"/>
<dbReference type="GeneID" id="61314993"/>
<dbReference type="KEGG" id="oan:Oant_3662"/>
<dbReference type="eggNOG" id="COG0721">
    <property type="taxonomic scope" value="Bacteria"/>
</dbReference>
<dbReference type="HOGENOM" id="CLU_105899_2_0_5"/>
<dbReference type="Proteomes" id="UP000002301">
    <property type="component" value="Chromosome 2"/>
</dbReference>
<dbReference type="GO" id="GO:0050566">
    <property type="term" value="F:asparaginyl-tRNA synthase (glutamine-hydrolyzing) activity"/>
    <property type="evidence" value="ECO:0007669"/>
    <property type="project" value="RHEA"/>
</dbReference>
<dbReference type="GO" id="GO:0005524">
    <property type="term" value="F:ATP binding"/>
    <property type="evidence" value="ECO:0007669"/>
    <property type="project" value="UniProtKB-KW"/>
</dbReference>
<dbReference type="GO" id="GO:0050567">
    <property type="term" value="F:glutaminyl-tRNA synthase (glutamine-hydrolyzing) activity"/>
    <property type="evidence" value="ECO:0007669"/>
    <property type="project" value="UniProtKB-UniRule"/>
</dbReference>
<dbReference type="GO" id="GO:0070681">
    <property type="term" value="P:glutaminyl-tRNAGln biosynthesis via transamidation"/>
    <property type="evidence" value="ECO:0007669"/>
    <property type="project" value="TreeGrafter"/>
</dbReference>
<dbReference type="GO" id="GO:0006450">
    <property type="term" value="P:regulation of translational fidelity"/>
    <property type="evidence" value="ECO:0007669"/>
    <property type="project" value="InterPro"/>
</dbReference>
<dbReference type="GO" id="GO:0006412">
    <property type="term" value="P:translation"/>
    <property type="evidence" value="ECO:0007669"/>
    <property type="project" value="UniProtKB-UniRule"/>
</dbReference>
<dbReference type="Gene3D" id="1.10.20.60">
    <property type="entry name" value="Glu-tRNAGln amidotransferase C subunit, N-terminal domain"/>
    <property type="match status" value="1"/>
</dbReference>
<dbReference type="HAMAP" id="MF_00122">
    <property type="entry name" value="GatC"/>
    <property type="match status" value="1"/>
</dbReference>
<dbReference type="InterPro" id="IPR036113">
    <property type="entry name" value="Asp/Glu-ADT_sf_sub_c"/>
</dbReference>
<dbReference type="InterPro" id="IPR003837">
    <property type="entry name" value="GatC"/>
</dbReference>
<dbReference type="NCBIfam" id="TIGR00135">
    <property type="entry name" value="gatC"/>
    <property type="match status" value="1"/>
</dbReference>
<dbReference type="PANTHER" id="PTHR15004">
    <property type="entry name" value="GLUTAMYL-TRNA(GLN) AMIDOTRANSFERASE SUBUNIT C, MITOCHONDRIAL"/>
    <property type="match status" value="1"/>
</dbReference>
<dbReference type="PANTHER" id="PTHR15004:SF0">
    <property type="entry name" value="GLUTAMYL-TRNA(GLN) AMIDOTRANSFERASE SUBUNIT C, MITOCHONDRIAL"/>
    <property type="match status" value="1"/>
</dbReference>
<dbReference type="Pfam" id="PF02686">
    <property type="entry name" value="GatC"/>
    <property type="match status" value="1"/>
</dbReference>
<dbReference type="SUPFAM" id="SSF141000">
    <property type="entry name" value="Glu-tRNAGln amidotransferase C subunit"/>
    <property type="match status" value="1"/>
</dbReference>